<sequence length="220" mass="24660">MAKNRFNQSWLHDHINDPYVKMAQREGYRARAAYKLKEIDEQDKLIRPGQVIVDLGAAPGSWSQYARNKLAQGKRRDAVREGGIDGTIIALDMLPMEPVADVHFIQGDFREESVLHQLEEVLAGRAVDLVISDMAPNLSGVAVADAARIEHVCDLALEFAQNHLKPDGALLVKCFHGSGYSQIVEKFKHQFKTVAPRKPKASRDKSSETFILGRHLKQPR</sequence>
<proteinExistence type="inferred from homology"/>
<accession>A2S3Q7</accession>
<protein>
    <recommendedName>
        <fullName evidence="1">Ribosomal RNA large subunit methyltransferase E</fullName>
        <ecNumber evidence="1">2.1.1.166</ecNumber>
    </recommendedName>
    <alternativeName>
        <fullName evidence="1">23S rRNA Um2552 methyltransferase</fullName>
    </alternativeName>
    <alternativeName>
        <fullName evidence="1">rRNA (uridine-2'-O-)-methyltransferase</fullName>
    </alternativeName>
</protein>
<gene>
    <name evidence="1" type="primary">rlmE</name>
    <name evidence="1" type="synonym">ftsJ</name>
    <name evidence="1" type="synonym">rrmJ</name>
    <name type="ordered locus">BMA10229_A0581</name>
</gene>
<dbReference type="EC" id="2.1.1.166" evidence="1"/>
<dbReference type="EMBL" id="CP000546">
    <property type="protein sequence ID" value="ABN00756.1"/>
    <property type="molecule type" value="Genomic_DNA"/>
</dbReference>
<dbReference type="RefSeq" id="WP_004193119.1">
    <property type="nucleotide sequence ID" value="NC_008836.1"/>
</dbReference>
<dbReference type="SMR" id="A2S3Q7"/>
<dbReference type="KEGG" id="bml:BMA10229_A0581"/>
<dbReference type="HOGENOM" id="CLU_009422_4_1_4"/>
<dbReference type="Proteomes" id="UP000002283">
    <property type="component" value="Chromosome I"/>
</dbReference>
<dbReference type="GO" id="GO:0005737">
    <property type="term" value="C:cytoplasm"/>
    <property type="evidence" value="ECO:0007669"/>
    <property type="project" value="UniProtKB-SubCell"/>
</dbReference>
<dbReference type="GO" id="GO:0008650">
    <property type="term" value="F:rRNA (uridine-2'-O-)-methyltransferase activity"/>
    <property type="evidence" value="ECO:0007669"/>
    <property type="project" value="UniProtKB-UniRule"/>
</dbReference>
<dbReference type="FunFam" id="3.40.50.150:FF:000005">
    <property type="entry name" value="Ribosomal RNA large subunit methyltransferase E"/>
    <property type="match status" value="1"/>
</dbReference>
<dbReference type="Gene3D" id="3.40.50.150">
    <property type="entry name" value="Vaccinia Virus protein VP39"/>
    <property type="match status" value="1"/>
</dbReference>
<dbReference type="HAMAP" id="MF_01547">
    <property type="entry name" value="RNA_methyltr_E"/>
    <property type="match status" value="1"/>
</dbReference>
<dbReference type="InterPro" id="IPR050082">
    <property type="entry name" value="RNA_methyltr_RlmE"/>
</dbReference>
<dbReference type="InterPro" id="IPR002877">
    <property type="entry name" value="RNA_MeTrfase_FtsJ_dom"/>
</dbReference>
<dbReference type="InterPro" id="IPR015507">
    <property type="entry name" value="rRNA-MeTfrase_E"/>
</dbReference>
<dbReference type="InterPro" id="IPR029063">
    <property type="entry name" value="SAM-dependent_MTases_sf"/>
</dbReference>
<dbReference type="PANTHER" id="PTHR10920">
    <property type="entry name" value="RIBOSOMAL RNA METHYLTRANSFERASE"/>
    <property type="match status" value="1"/>
</dbReference>
<dbReference type="PANTHER" id="PTHR10920:SF18">
    <property type="entry name" value="RRNA METHYLTRANSFERASE 2, MITOCHONDRIAL"/>
    <property type="match status" value="1"/>
</dbReference>
<dbReference type="Pfam" id="PF01728">
    <property type="entry name" value="FtsJ"/>
    <property type="match status" value="1"/>
</dbReference>
<dbReference type="PIRSF" id="PIRSF005461">
    <property type="entry name" value="23S_rRNA_mtase"/>
    <property type="match status" value="1"/>
</dbReference>
<dbReference type="SUPFAM" id="SSF53335">
    <property type="entry name" value="S-adenosyl-L-methionine-dependent methyltransferases"/>
    <property type="match status" value="1"/>
</dbReference>
<feature type="chain" id="PRO_1000087676" description="Ribosomal RNA large subunit methyltransferase E">
    <location>
        <begin position="1"/>
        <end position="220"/>
    </location>
</feature>
<feature type="region of interest" description="Disordered" evidence="2">
    <location>
        <begin position="195"/>
        <end position="220"/>
    </location>
</feature>
<feature type="active site" description="Proton acceptor" evidence="1">
    <location>
        <position position="173"/>
    </location>
</feature>
<feature type="binding site" evidence="1">
    <location>
        <position position="60"/>
    </location>
    <ligand>
        <name>S-adenosyl-L-methionine</name>
        <dbReference type="ChEBI" id="CHEBI:59789"/>
    </ligand>
</feature>
<feature type="binding site" evidence="1">
    <location>
        <position position="62"/>
    </location>
    <ligand>
        <name>S-adenosyl-L-methionine</name>
        <dbReference type="ChEBI" id="CHEBI:59789"/>
    </ligand>
</feature>
<feature type="binding site" evidence="1">
    <location>
        <position position="92"/>
    </location>
    <ligand>
        <name>S-adenosyl-L-methionine</name>
        <dbReference type="ChEBI" id="CHEBI:59789"/>
    </ligand>
</feature>
<feature type="binding site" evidence="1">
    <location>
        <position position="108"/>
    </location>
    <ligand>
        <name>S-adenosyl-L-methionine</name>
        <dbReference type="ChEBI" id="CHEBI:59789"/>
    </ligand>
</feature>
<feature type="binding site" evidence="1">
    <location>
        <position position="133"/>
    </location>
    <ligand>
        <name>S-adenosyl-L-methionine</name>
        <dbReference type="ChEBI" id="CHEBI:59789"/>
    </ligand>
</feature>
<name>RLME_BURM9</name>
<evidence type="ECO:0000255" key="1">
    <source>
        <dbReference type="HAMAP-Rule" id="MF_01547"/>
    </source>
</evidence>
<evidence type="ECO:0000256" key="2">
    <source>
        <dbReference type="SAM" id="MobiDB-lite"/>
    </source>
</evidence>
<comment type="function">
    <text evidence="1">Specifically methylates the uridine in position 2552 of 23S rRNA at the 2'-O position of the ribose in the fully assembled 50S ribosomal subunit.</text>
</comment>
<comment type="catalytic activity">
    <reaction evidence="1">
        <text>uridine(2552) in 23S rRNA + S-adenosyl-L-methionine = 2'-O-methyluridine(2552) in 23S rRNA + S-adenosyl-L-homocysteine + H(+)</text>
        <dbReference type="Rhea" id="RHEA:42720"/>
        <dbReference type="Rhea" id="RHEA-COMP:10202"/>
        <dbReference type="Rhea" id="RHEA-COMP:10203"/>
        <dbReference type="ChEBI" id="CHEBI:15378"/>
        <dbReference type="ChEBI" id="CHEBI:57856"/>
        <dbReference type="ChEBI" id="CHEBI:59789"/>
        <dbReference type="ChEBI" id="CHEBI:65315"/>
        <dbReference type="ChEBI" id="CHEBI:74478"/>
        <dbReference type="EC" id="2.1.1.166"/>
    </reaction>
</comment>
<comment type="subcellular location">
    <subcellularLocation>
        <location evidence="1">Cytoplasm</location>
    </subcellularLocation>
</comment>
<comment type="similarity">
    <text evidence="1">Belongs to the class I-like SAM-binding methyltransferase superfamily. RNA methyltransferase RlmE family.</text>
</comment>
<organism>
    <name type="scientific">Burkholderia mallei (strain NCTC 10229)</name>
    <dbReference type="NCBI Taxonomy" id="412022"/>
    <lineage>
        <taxon>Bacteria</taxon>
        <taxon>Pseudomonadati</taxon>
        <taxon>Pseudomonadota</taxon>
        <taxon>Betaproteobacteria</taxon>
        <taxon>Burkholderiales</taxon>
        <taxon>Burkholderiaceae</taxon>
        <taxon>Burkholderia</taxon>
        <taxon>pseudomallei group</taxon>
    </lineage>
</organism>
<keyword id="KW-0963">Cytoplasm</keyword>
<keyword id="KW-0489">Methyltransferase</keyword>
<keyword id="KW-0698">rRNA processing</keyword>
<keyword id="KW-0949">S-adenosyl-L-methionine</keyword>
<keyword id="KW-0808">Transferase</keyword>
<reference key="1">
    <citation type="journal article" date="2010" name="Genome Biol. Evol.">
        <title>Continuing evolution of Burkholderia mallei through genome reduction and large-scale rearrangements.</title>
        <authorList>
            <person name="Losada L."/>
            <person name="Ronning C.M."/>
            <person name="DeShazer D."/>
            <person name="Woods D."/>
            <person name="Fedorova N."/>
            <person name="Kim H.S."/>
            <person name="Shabalina S.A."/>
            <person name="Pearson T.R."/>
            <person name="Brinkac L."/>
            <person name="Tan P."/>
            <person name="Nandi T."/>
            <person name="Crabtree J."/>
            <person name="Badger J."/>
            <person name="Beckstrom-Sternberg S."/>
            <person name="Saqib M."/>
            <person name="Schutzer S.E."/>
            <person name="Keim P."/>
            <person name="Nierman W.C."/>
        </authorList>
    </citation>
    <scope>NUCLEOTIDE SEQUENCE [LARGE SCALE GENOMIC DNA]</scope>
    <source>
        <strain>NCTC 10229</strain>
    </source>
</reference>